<evidence type="ECO:0000250" key="1"/>
<evidence type="ECO:0000255" key="2">
    <source>
        <dbReference type="HAMAP-Rule" id="MF_00696"/>
    </source>
</evidence>
<organism>
    <name type="scientific">Salmonella typhimurium (strain LT2 / SGSC1412 / ATCC 700720)</name>
    <dbReference type="NCBI Taxonomy" id="99287"/>
    <lineage>
        <taxon>Bacteria</taxon>
        <taxon>Pseudomonadati</taxon>
        <taxon>Pseudomonadota</taxon>
        <taxon>Gammaproteobacteria</taxon>
        <taxon>Enterobacterales</taxon>
        <taxon>Enterobacteriaceae</taxon>
        <taxon>Salmonella</taxon>
    </lineage>
</organism>
<comment type="function">
    <text evidence="2">Multifunctional regulator of fatty acid metabolism. Represses transcription of at least eight genes required for fatty acid transport and beta-oxidation including fadA, fadB, fadD, fadL and fadE. Activates transcription of at least three genes required for unsaturated fatty acid biosynthesis: fabA, fabB and iclR, the gene encoding the transcriptional regulator of the aceBAK operon encoding the glyoxylate shunt enzymes. Binding of FadR is specifically inhibited by long chain fatty acyl-CoA compounds (By similarity).</text>
</comment>
<comment type="subunit">
    <text evidence="2">Homodimer.</text>
</comment>
<comment type="subcellular location">
    <subcellularLocation>
        <location evidence="2">Cytoplasm</location>
    </subcellularLocation>
</comment>
<keyword id="KW-0010">Activator</keyword>
<keyword id="KW-0963">Cytoplasm</keyword>
<keyword id="KW-0238">DNA-binding</keyword>
<keyword id="KW-0276">Fatty acid metabolism</keyword>
<keyword id="KW-0443">Lipid metabolism</keyword>
<keyword id="KW-1185">Reference proteome</keyword>
<keyword id="KW-0678">Repressor</keyword>
<keyword id="KW-0804">Transcription</keyword>
<keyword id="KW-0805">Transcription regulation</keyword>
<reference key="1">
    <citation type="journal article" date="2001" name="Nature">
        <title>Complete genome sequence of Salmonella enterica serovar Typhimurium LT2.</title>
        <authorList>
            <person name="McClelland M."/>
            <person name="Sanderson K.E."/>
            <person name="Spieth J."/>
            <person name="Clifton S.W."/>
            <person name="Latreille P."/>
            <person name="Courtney L."/>
            <person name="Porwollik S."/>
            <person name="Ali J."/>
            <person name="Dante M."/>
            <person name="Du F."/>
            <person name="Hou S."/>
            <person name="Layman D."/>
            <person name="Leonard S."/>
            <person name="Nguyen C."/>
            <person name="Scott K."/>
            <person name="Holmes A."/>
            <person name="Grewal N."/>
            <person name="Mulvaney E."/>
            <person name="Ryan E."/>
            <person name="Sun H."/>
            <person name="Florea L."/>
            <person name="Miller W."/>
            <person name="Stoneking T."/>
            <person name="Nhan M."/>
            <person name="Waterston R."/>
            <person name="Wilson R.K."/>
        </authorList>
    </citation>
    <scope>NUCLEOTIDE SEQUENCE [LARGE SCALE GENOMIC DNA]</scope>
    <source>
        <strain>LT2 / SGSC1412 / ATCC 700720</strain>
    </source>
</reference>
<name>FADR_SALTY</name>
<proteinExistence type="inferred from homology"/>
<dbReference type="EMBL" id="AE006468">
    <property type="protein sequence ID" value="AAL20720.1"/>
    <property type="molecule type" value="Genomic_DNA"/>
</dbReference>
<dbReference type="RefSeq" id="NP_460761.1">
    <property type="nucleotide sequence ID" value="NC_003197.2"/>
</dbReference>
<dbReference type="RefSeq" id="WP_000234826.1">
    <property type="nucleotide sequence ID" value="NC_003197.2"/>
</dbReference>
<dbReference type="SMR" id="Q8ZP15"/>
<dbReference type="STRING" id="99287.STM1805"/>
<dbReference type="PaxDb" id="99287-STM1805"/>
<dbReference type="GeneID" id="1253324"/>
<dbReference type="KEGG" id="stm:STM1805"/>
<dbReference type="PATRIC" id="fig|99287.12.peg.1904"/>
<dbReference type="HOGENOM" id="CLU_017584_9_4_6"/>
<dbReference type="OMA" id="TRVLDWR"/>
<dbReference type="PhylomeDB" id="Q8ZP15"/>
<dbReference type="BioCyc" id="SENT99287:STM1805-MONOMER"/>
<dbReference type="Proteomes" id="UP000001014">
    <property type="component" value="Chromosome"/>
</dbReference>
<dbReference type="GO" id="GO:0005737">
    <property type="term" value="C:cytoplasm"/>
    <property type="evidence" value="ECO:0007669"/>
    <property type="project" value="UniProtKB-SubCell"/>
</dbReference>
<dbReference type="GO" id="GO:0003677">
    <property type="term" value="F:DNA binding"/>
    <property type="evidence" value="ECO:0007669"/>
    <property type="project" value="UniProtKB-KW"/>
</dbReference>
<dbReference type="GO" id="GO:0003700">
    <property type="term" value="F:DNA-binding transcription factor activity"/>
    <property type="evidence" value="ECO:0007669"/>
    <property type="project" value="UniProtKB-UniRule"/>
</dbReference>
<dbReference type="GO" id="GO:0000062">
    <property type="term" value="F:fatty-acyl-CoA binding"/>
    <property type="evidence" value="ECO:0007669"/>
    <property type="project" value="InterPro"/>
</dbReference>
<dbReference type="GO" id="GO:0006631">
    <property type="term" value="P:fatty acid metabolic process"/>
    <property type="evidence" value="ECO:0007669"/>
    <property type="project" value="UniProtKB-KW"/>
</dbReference>
<dbReference type="GO" id="GO:0019217">
    <property type="term" value="P:regulation of fatty acid metabolic process"/>
    <property type="evidence" value="ECO:0007669"/>
    <property type="project" value="UniProtKB-UniRule"/>
</dbReference>
<dbReference type="CDD" id="cd07377">
    <property type="entry name" value="WHTH_GntR"/>
    <property type="match status" value="1"/>
</dbReference>
<dbReference type="FunFam" id="1.10.10.10:FF:000036">
    <property type="entry name" value="Fatty acid metabolism regulator protein"/>
    <property type="match status" value="1"/>
</dbReference>
<dbReference type="FunFam" id="1.20.120.530:FF:000003">
    <property type="entry name" value="Fatty acid metabolism regulator protein"/>
    <property type="match status" value="1"/>
</dbReference>
<dbReference type="Gene3D" id="1.20.120.530">
    <property type="entry name" value="GntR ligand-binding domain-like"/>
    <property type="match status" value="1"/>
</dbReference>
<dbReference type="Gene3D" id="1.10.10.10">
    <property type="entry name" value="Winged helix-like DNA-binding domain superfamily/Winged helix DNA-binding domain"/>
    <property type="match status" value="1"/>
</dbReference>
<dbReference type="HAMAP" id="MF_00696">
    <property type="entry name" value="HTH_FadR"/>
    <property type="match status" value="1"/>
</dbReference>
<dbReference type="InterPro" id="IPR014178">
    <property type="entry name" value="FA-response_TF_FadR"/>
</dbReference>
<dbReference type="InterPro" id="IPR028374">
    <property type="entry name" value="FadR_C"/>
</dbReference>
<dbReference type="InterPro" id="IPR008920">
    <property type="entry name" value="TF_FadR/GntR_C"/>
</dbReference>
<dbReference type="InterPro" id="IPR000524">
    <property type="entry name" value="Tscrpt_reg_HTH_GntR"/>
</dbReference>
<dbReference type="InterPro" id="IPR036388">
    <property type="entry name" value="WH-like_DNA-bd_sf"/>
</dbReference>
<dbReference type="InterPro" id="IPR036390">
    <property type="entry name" value="WH_DNA-bd_sf"/>
</dbReference>
<dbReference type="NCBIfam" id="TIGR02812">
    <property type="entry name" value="fadR_gamma"/>
    <property type="match status" value="1"/>
</dbReference>
<dbReference type="NCBIfam" id="NF003444">
    <property type="entry name" value="PRK04984.1"/>
    <property type="match status" value="1"/>
</dbReference>
<dbReference type="PANTHER" id="PTHR43537:SF52">
    <property type="entry name" value="FATTY ACID METABOLISM REGULATOR PROTEIN"/>
    <property type="match status" value="1"/>
</dbReference>
<dbReference type="PANTHER" id="PTHR43537">
    <property type="entry name" value="TRANSCRIPTIONAL REGULATOR, GNTR FAMILY"/>
    <property type="match status" value="1"/>
</dbReference>
<dbReference type="Pfam" id="PF07840">
    <property type="entry name" value="FadR_C"/>
    <property type="match status" value="1"/>
</dbReference>
<dbReference type="Pfam" id="PF00392">
    <property type="entry name" value="GntR"/>
    <property type="match status" value="1"/>
</dbReference>
<dbReference type="PRINTS" id="PR00035">
    <property type="entry name" value="HTHGNTR"/>
</dbReference>
<dbReference type="SMART" id="SM00345">
    <property type="entry name" value="HTH_GNTR"/>
    <property type="match status" value="1"/>
</dbReference>
<dbReference type="SUPFAM" id="SSF48008">
    <property type="entry name" value="GntR ligand-binding domain-like"/>
    <property type="match status" value="1"/>
</dbReference>
<dbReference type="SUPFAM" id="SSF46785">
    <property type="entry name" value="Winged helix' DNA-binding domain"/>
    <property type="match status" value="1"/>
</dbReference>
<dbReference type="PROSITE" id="PS50949">
    <property type="entry name" value="HTH_GNTR"/>
    <property type="match status" value="1"/>
</dbReference>
<sequence length="239" mass="26987">MVIKAQSPAGFAEEYIIESIWNNRFPPGTILPAERELSELIGVTRTTLREVLQRLARDGWLTIQHGKPTKVNNFWETSGLNILETLARLDHESVPQLIDNLLSVRTNISTIFIRTALRQHPDKAQEVLATAHEVADHADAFADLDYNIFRGLAFASGNPIYGLILNGMKGLYTRIGRHYFANPEARSLALGFYHKLSSLCEQGAHDQVYETVRRYGHDSGEIWHRMQKNLPGDLAIQGR</sequence>
<gene>
    <name evidence="2" type="primary">fadR</name>
    <name type="ordered locus">STM1805</name>
</gene>
<accession>Q8ZP15</accession>
<protein>
    <recommendedName>
        <fullName evidence="2">Fatty acid metabolism regulator protein</fullName>
    </recommendedName>
</protein>
<feature type="initiator methionine" description="Removed" evidence="1">
    <location>
        <position position="1"/>
    </location>
</feature>
<feature type="chain" id="PRO_0000050633" description="Fatty acid metabolism regulator protein">
    <location>
        <begin position="2"/>
        <end position="239"/>
    </location>
</feature>
<feature type="domain" description="HTH gntR-type" evidence="2">
    <location>
        <begin position="6"/>
        <end position="74"/>
    </location>
</feature>
<feature type="DNA-binding region" description="H-T-H motif" evidence="2">
    <location>
        <begin position="34"/>
        <end position="53"/>
    </location>
</feature>